<protein>
    <recommendedName>
        <fullName evidence="1">Nuclear export protein</fullName>
        <shortName evidence="1">NEP</shortName>
    </recommendedName>
    <alternativeName>
        <fullName evidence="1">Non-structural protein 2</fullName>
        <shortName evidence="1">NS2</shortName>
    </alternativeName>
</protein>
<sequence length="121" mass="14390">MDSNTVSSFQDILKRMSKMQLGSSSEDLNGMITQFESLKLYRDSLGEAVMRMGDLHSLQNRNGKWREQLSQKFEEIRWLIEEVRHRLRITENSFEQITFMQALQLLLEVEQEIRTFSFQLI</sequence>
<evidence type="ECO:0000255" key="1">
    <source>
        <dbReference type="HAMAP-Rule" id="MF_04067"/>
    </source>
</evidence>
<dbReference type="EMBL" id="AF036360">
    <property type="protein sequence ID" value="AAC34269.2"/>
    <property type="molecule type" value="Genomic_RNA"/>
</dbReference>
<dbReference type="EMBL" id="AF046091">
    <property type="protein sequence ID" value="AAC32093.1"/>
    <property type="molecule type" value="Genomic_RNA"/>
</dbReference>
<dbReference type="EMBL" id="AJ404736">
    <property type="protein sequence ID" value="CAC04090.1"/>
    <property type="molecule type" value="Genomic_RNA"/>
</dbReference>
<dbReference type="SMR" id="O56263"/>
<dbReference type="Proteomes" id="UP000008587">
    <property type="component" value="Genome"/>
</dbReference>
<dbReference type="GO" id="GO:0042025">
    <property type="term" value="C:host cell nucleus"/>
    <property type="evidence" value="ECO:0007669"/>
    <property type="project" value="UniProtKB-SubCell"/>
</dbReference>
<dbReference type="GO" id="GO:0044423">
    <property type="term" value="C:virion component"/>
    <property type="evidence" value="ECO:0007669"/>
    <property type="project" value="UniProtKB-UniRule"/>
</dbReference>
<dbReference type="GO" id="GO:0039675">
    <property type="term" value="P:exit of virus from host cell nucleus through nuclear pore"/>
    <property type="evidence" value="ECO:0007669"/>
    <property type="project" value="UniProtKB-UniRule"/>
</dbReference>
<dbReference type="Gene3D" id="1.10.287.230">
    <property type="match status" value="1"/>
</dbReference>
<dbReference type="Gene3D" id="1.10.287.10">
    <property type="entry name" value="S15/NS1, RNA-binding"/>
    <property type="match status" value="1"/>
</dbReference>
<dbReference type="HAMAP" id="MF_04067">
    <property type="entry name" value="INFV_NEP"/>
    <property type="match status" value="1"/>
</dbReference>
<dbReference type="InterPro" id="IPR000968">
    <property type="entry name" value="Flu_NS2"/>
</dbReference>
<dbReference type="Pfam" id="PF00601">
    <property type="entry name" value="Flu_NS2"/>
    <property type="match status" value="1"/>
</dbReference>
<dbReference type="SUPFAM" id="SSF101156">
    <property type="entry name" value="Nonstructural protein ns2, Nep, M1-binding domain"/>
    <property type="match status" value="1"/>
</dbReference>
<name>NEP_I97A1</name>
<feature type="chain" id="PRO_0000078991" description="Nuclear export protein">
    <location>
        <begin position="1"/>
        <end position="121"/>
    </location>
</feature>
<feature type="short sequence motif" description="Nuclear export signal" evidence="1">
    <location>
        <begin position="12"/>
        <end position="21"/>
    </location>
</feature>
<feature type="short sequence motif" description="Nuclear export signal" evidence="1">
    <location>
        <begin position="85"/>
        <end position="94"/>
    </location>
</feature>
<accession>O56263</accession>
<accession>Q778E8</accession>
<accession>Q9YX77</accession>
<gene>
    <name evidence="1" type="primary">NS</name>
</gene>
<keyword id="KW-0025">Alternative splicing</keyword>
<keyword id="KW-1048">Host nucleus</keyword>
<keyword id="KW-0945">Host-virus interaction</keyword>
<keyword id="KW-0813">Transport</keyword>
<keyword id="KW-0946">Virion</keyword>
<organismHost>
    <name type="scientific">Aves</name>
    <dbReference type="NCBI Taxonomy" id="8782"/>
</organismHost>
<organismHost>
    <name type="scientific">Felis catus</name>
    <name type="common">Cat</name>
    <name type="synonym">Felis silvestris catus</name>
    <dbReference type="NCBI Taxonomy" id="9685"/>
</organismHost>
<organismHost>
    <name type="scientific">Homo sapiens</name>
    <name type="common">Human</name>
    <dbReference type="NCBI Taxonomy" id="9606"/>
</organismHost>
<organismHost>
    <name type="scientific">Panthera pardus</name>
    <name type="common">Leopard</name>
    <name type="synonym">Felis pardus</name>
    <dbReference type="NCBI Taxonomy" id="9691"/>
</organismHost>
<organismHost>
    <name type="scientific">Panthera tigris</name>
    <name type="common">Tiger</name>
    <dbReference type="NCBI Taxonomy" id="9694"/>
</organismHost>
<organismHost>
    <name type="scientific">Sus scrofa</name>
    <name type="common">Pig</name>
    <dbReference type="NCBI Taxonomy" id="9823"/>
</organismHost>
<reference key="1">
    <citation type="journal article" date="1998" name="Science">
        <title>Characterization of an avian influenza A (H5N1) virus isolated from a child with a fatal respiratory illness.</title>
        <authorList>
            <person name="Subbarao K."/>
            <person name="Klimov A."/>
            <person name="Katz J."/>
            <person name="Regnery H."/>
            <person name="Lim W."/>
            <person name="Hall H."/>
            <person name="Perdue M."/>
            <person name="Swayne D."/>
            <person name="Bender C."/>
            <person name="Huang J."/>
            <person name="Hemphill M."/>
            <person name="Rowe T."/>
            <person name="Shaw M."/>
            <person name="Xu X."/>
            <person name="Fukuda K."/>
            <person name="Cox N."/>
        </authorList>
    </citation>
    <scope>NUCLEOTIDE SEQUENCE [GENOMIC RNA]</scope>
</reference>
<reference key="2">
    <citation type="submission" date="2012-11" db="EMBL/GenBank/DDBJ databases">
        <authorList>
            <person name="Subbarao K."/>
            <person name="Klimov A."/>
            <person name="Katz J."/>
            <person name="Regnery H."/>
            <person name="Lim W."/>
            <person name="Hall H."/>
            <person name="Perdue M."/>
            <person name="Swayne D."/>
            <person name="Bender C."/>
            <person name="Huang J."/>
            <person name="Hemphill M."/>
            <person name="Rowe T."/>
            <person name="Shaw M."/>
            <person name="Xu X."/>
            <person name="Fukuda K."/>
            <person name="Cox N."/>
        </authorList>
    </citation>
    <scope>SEQUENCE REVISION</scope>
</reference>
<reference key="3">
    <citation type="journal article" date="1998" name="J. Virol.">
        <title>Comparisons of highly virulent H5N1 influenza A viruses isolated from humans and chickens from Hong Kong.</title>
        <authorList>
            <person name="Suarez D.L."/>
            <person name="Perdue M.L."/>
            <person name="Cox N."/>
            <person name="Rowe T."/>
            <person name="Bender C."/>
            <person name="Huang J."/>
            <person name="Swayne D.E."/>
        </authorList>
    </citation>
    <scope>NUCLEOTIDE SEQUENCE [GENOMIC RNA]</scope>
</reference>
<reference key="4">
    <citation type="journal article" date="2000" name="Proc. Natl. Acad. Sci. U.S.A.">
        <title>Avian-to-human transmission of H9N2 subtype influenza A viruses: relationship between H9N2 and H5N1 human isolates.</title>
        <authorList>
            <person name="Lin Y.P."/>
            <person name="Shaw M."/>
            <person name="Gregory V."/>
            <person name="Cameron K."/>
            <person name="Lim W."/>
            <person name="Klimov A."/>
            <person name="Subbarao K."/>
            <person name="Guan Y."/>
            <person name="Krauss S."/>
            <person name="Shortridge K."/>
            <person name="Webster R."/>
            <person name="Cox N."/>
            <person name="Hay A."/>
        </authorList>
    </citation>
    <scope>NUCLEOTIDE SEQUENCE [GENOMIC RNA]</scope>
</reference>
<proteinExistence type="inferred from homology"/>
<organism>
    <name type="scientific">Influenza A virus (strain A/Hong Kong/156/1997 H5N1 genotype Gs/Gd)</name>
    <dbReference type="NCBI Taxonomy" id="130763"/>
    <lineage>
        <taxon>Viruses</taxon>
        <taxon>Riboviria</taxon>
        <taxon>Orthornavirae</taxon>
        <taxon>Negarnaviricota</taxon>
        <taxon>Polyploviricotina</taxon>
        <taxon>Insthoviricetes</taxon>
        <taxon>Articulavirales</taxon>
        <taxon>Orthomyxoviridae</taxon>
        <taxon>Alphainfluenzavirus</taxon>
        <taxon>Alphainfluenzavirus influenzae</taxon>
        <taxon>Influenza A virus</taxon>
    </lineage>
</organism>
<comment type="function">
    <text evidence="1">Mediates the nuclear export of encapsidated genomic RNAs (ribonucleoproteins, RNPs). Acts as an adapter between viral RNPs complexes and the nuclear export machinery of the cell. Possesses no intrinsic RNA-binding activity, but includes a C-terminal M1-binding domain. This domain is believed to allow recognition of RNPs bound to the protein M1. Since protein M1 is not available in large quantities before late stages of infection, such an indirect recognition mechanism probably ensures that genomic RNPs are not exported from the host nucleus until sufficient quantities of viral mRNA and progeny genomic RNA have been synthesized. Furthermore, the RNPs enter the host cytoplasm only when associated with the M1 protein that is necessary to guide them to the plasma membrane. May down-regulate viral RNA synthesis when overproduced.</text>
</comment>
<comment type="subunit">
    <text evidence="1">Interacts with protein M1. May interact with host nucleoporin RAB/HRB and exportin XPO1/CRM1.</text>
</comment>
<comment type="subcellular location">
    <subcellularLocation>
        <location evidence="1">Virion</location>
    </subcellularLocation>
    <subcellularLocation>
        <location evidence="1">Host nucleus</location>
    </subcellularLocation>
</comment>
<comment type="alternative products">
    <event type="alternative splicing"/>
    <isoform>
        <id>O56263-1</id>
        <name>NEP</name>
        <name>NS2</name>
        <sequence type="displayed"/>
    </isoform>
    <isoform>
        <id>O56264-1</id>
        <name>NS1</name>
        <sequence type="external"/>
    </isoform>
</comment>
<comment type="miscellaneous">
    <text>Average number present in a viral particle is estimated to be 130-200 molecules.</text>
</comment>
<comment type="similarity">
    <text evidence="1">Belongs to the influenza viruses NEP family.</text>
</comment>